<accession>Q8AYS8</accession>
<accession>O12942</accession>
<accession>O13110</accession>
<accession>O93569</accession>
<accession>Q98951</accession>
<accession>Q9PS76</accession>
<proteinExistence type="evidence at protein level"/>
<sequence length="1137" mass="127647">MSNNINANNLNTDSSSSPVNVPKMDALIIPVTMEVPCDSRGQRMWWAFLASSMVTFFGGLFIILLWRTLKYLWTVCCHCGVKNKEAQKINGGGDTQADGACKPTDEKEENVAAEVGWMTSVKDWAGVMISAQTLTGRVLVVLVFALSIGALVIYFIDSSNPIESCQNFYKDFTLQIDMAFNVFFLLYFGLRFIAANDKLWFWLEVNSVVDFFTVPPVFVSVYLNRSWLGLRFLRALRLIQFSEILQFLNILKTSNSIKLVNLCSIFISTWLTAAGFIHLVENSGDPWENFQNNQQLTYWECVYLLMVTMSTVGYGDVYAKTTLGRLFMVFFILGGLAMFASYVPEIIELIGNRKKYGGSYSAVSGRKHIVVCGHITLESVSNFLKDFLHKDRDDVNVEIVFLHNISPNLELEALFKRHFTQVEFYQGSVLNPHDLARVKIESADACLILANKYCADPDAEDASNIMRVISIKNYHPKIRIITQMLQYHNKAHLLNIPSWNWKEGDDAICLAELKLGFIAQSCLAPGLSTMLANLFSMRSFIKIEEDTWQKYYLEGVANEMYTEYLSSAFVGLSFPAVCELVFAKLKLLMIAIEYKSEKRESSILINPGNHVKIQEGTLGFFIASDAKEVKRAFFYCKACHDDITDPKRIKKCGCKRLEDEQPSTLSPKKKQRNGGMRNSPNSSPKLMRHDPLLIPGNEQIDNMDANVKKYDSTGMFHWCPAKDIEKVILTRSEAAMTVLSGHVVVCIFGDVKSALIGLRNLVMPLRASNFHYHELKHIVFVGSLEYLRREWETLHNFPKVSILPGTPLSRADLRAVNINLCDMCVILSANQNNIDDASLQDKECILASLNIKSMQFDDSIGVLQANSQGFTPPGMDRSSPDNSPVHGLLRQPSITTGANIPIITELVNDSNVQFLDQDDDDDPDTELYLTQPFACGTAFAVSVLDSLMSATYFNDNILTLIRTLVTGGATPELEALIAEENALRGGYSTPQTLANRDRCRVAQLALYDGPFADLGDGGCYGDLFCKALKTYNMLCFGIYRLRDAHLSTPSQCTKRYVITNPPYEFELVPTDLIFCLMQFDHNAGQSRASLSHSSHSSYSSSKKSSSVHSIPSTANRPNRTKTRDSREKQKYVQEDRL</sequence>
<feature type="chain" id="PRO_0000054138" description="Calcium-activated potassium channel subunit alpha-1">
    <location>
        <begin position="1"/>
        <end position="1137"/>
    </location>
</feature>
<feature type="topological domain" description="Extracellular" evidence="4">
    <location>
        <begin position="1"/>
        <end position="44"/>
    </location>
</feature>
<feature type="transmembrane region" description="Helical; Name=Segment S0" evidence="4">
    <location>
        <begin position="45"/>
        <end position="65"/>
    </location>
</feature>
<feature type="topological domain" description="Cytoplasmic" evidence="4">
    <location>
        <begin position="66"/>
        <end position="137"/>
    </location>
</feature>
<feature type="transmembrane region" description="Helical; Name=Segment S1" evidence="4">
    <location>
        <begin position="138"/>
        <end position="158"/>
    </location>
</feature>
<feature type="topological domain" description="Extracellular" evidence="4">
    <location>
        <begin position="159"/>
        <end position="173"/>
    </location>
</feature>
<feature type="transmembrane region" description="Helical; Name=Segment S2" evidence="4">
    <location>
        <begin position="174"/>
        <end position="194"/>
    </location>
</feature>
<feature type="topological domain" description="Cytoplasmic" evidence="4">
    <location>
        <begin position="195"/>
        <end position="198"/>
    </location>
</feature>
<feature type="transmembrane region" description="Helical; Name=Segment S3" evidence="4">
    <location>
        <begin position="199"/>
        <end position="219"/>
    </location>
</feature>
<feature type="topological domain" description="Extracellular" evidence="4">
    <location>
        <begin position="220"/>
        <end position="223"/>
    </location>
</feature>
<feature type="transmembrane region" description="Helical; Voltage-sensor; Name=Segment S4" evidence="4">
    <location>
        <begin position="224"/>
        <end position="244"/>
    </location>
</feature>
<feature type="topological domain" description="Cytoplasmic" evidence="4">
    <location>
        <begin position="245"/>
        <end position="259"/>
    </location>
</feature>
<feature type="transmembrane region" description="Helical; Name=Segment S5" evidence="4">
    <location>
        <begin position="260"/>
        <end position="280"/>
    </location>
</feature>
<feature type="topological domain" description="Extracellular" evidence="4">
    <location>
        <begin position="281"/>
        <end position="294"/>
    </location>
</feature>
<feature type="intramembrane region" description="Pore-forming; Name=P region" evidence="4">
    <location>
        <begin position="295"/>
        <end position="317"/>
    </location>
</feature>
<feature type="topological domain" description="Extracellular" evidence="4">
    <location>
        <begin position="318"/>
        <end position="326"/>
    </location>
</feature>
<feature type="transmembrane region" description="Helical; Name=Segment S6" evidence="4">
    <location>
        <begin position="327"/>
        <end position="347"/>
    </location>
</feature>
<feature type="topological domain" description="Cytoplasmic" evidence="4">
    <location>
        <begin position="348"/>
        <end position="1137"/>
    </location>
</feature>
<feature type="domain" description="RCK N-terminal 1" evidence="5">
    <location>
        <begin position="366"/>
        <end position="508"/>
    </location>
</feature>
<feature type="domain" description="RCK N-terminal 2" evidence="5">
    <location>
        <begin position="740"/>
        <end position="884"/>
    </location>
</feature>
<feature type="region of interest" description="Segment S7">
    <location>
        <begin position="515"/>
        <end position="535"/>
    </location>
</feature>
<feature type="region of interest" description="Segment S8">
    <location>
        <begin position="572"/>
        <end position="592"/>
    </location>
</feature>
<feature type="region of interest" description="Heme-binding motif" evidence="3">
    <location>
        <begin position="636"/>
        <end position="640"/>
    </location>
</feature>
<feature type="region of interest" description="Disordered" evidence="6">
    <location>
        <begin position="660"/>
        <end position="688"/>
    </location>
</feature>
<feature type="region of interest" description="Segment S9">
    <location>
        <begin position="738"/>
        <end position="758"/>
    </location>
</feature>
<feature type="region of interest" description="Segment S10">
    <location>
        <begin position="933"/>
        <end position="953"/>
    </location>
</feature>
<feature type="region of interest" description="Disordered" evidence="6">
    <location>
        <begin position="1088"/>
        <end position="1137"/>
    </location>
</feature>
<feature type="short sequence motif" description="Selectivity for potassium">
    <location>
        <begin position="311"/>
        <end position="314"/>
    </location>
</feature>
<feature type="short sequence motif" description="Calcium bowl" evidence="2">
    <location>
        <begin position="904"/>
        <end position="926"/>
    </location>
</feature>
<feature type="compositionally biased region" description="Low complexity" evidence="6">
    <location>
        <begin position="1088"/>
        <end position="1112"/>
    </location>
</feature>
<feature type="compositionally biased region" description="Basic and acidic residues" evidence="6">
    <location>
        <begin position="1121"/>
        <end position="1137"/>
    </location>
</feature>
<feature type="binding site" evidence="13">
    <location>
        <position position="398"/>
    </location>
    <ligand>
        <name>Mg(2+)</name>
        <dbReference type="ChEBI" id="CHEBI:18420"/>
    </ligand>
</feature>
<feature type="binding site" evidence="13">
    <location>
        <position position="421"/>
    </location>
    <ligand>
        <name>Mg(2+)</name>
        <dbReference type="ChEBI" id="CHEBI:18420"/>
    </ligand>
</feature>
<feature type="binding site" evidence="13">
    <location>
        <position position="423"/>
    </location>
    <ligand>
        <name>Mg(2+)</name>
        <dbReference type="ChEBI" id="CHEBI:18420"/>
    </ligand>
</feature>
<feature type="binding site" evidence="2">
    <location>
        <position position="913"/>
    </location>
    <ligand>
        <name>Ca(2+)</name>
        <dbReference type="ChEBI" id="CHEBI:29108"/>
    </ligand>
</feature>
<feature type="binding site" evidence="2">
    <location>
        <position position="916"/>
    </location>
    <ligand>
        <name>Ca(2+)</name>
        <dbReference type="ChEBI" id="CHEBI:29108"/>
    </ligand>
</feature>
<feature type="binding site" evidence="2">
    <location>
        <position position="919"/>
    </location>
    <ligand>
        <name>Ca(2+)</name>
        <dbReference type="ChEBI" id="CHEBI:29108"/>
    </ligand>
</feature>
<feature type="binding site" evidence="2">
    <location>
        <position position="921"/>
    </location>
    <ligand>
        <name>Ca(2+)</name>
        <dbReference type="ChEBI" id="CHEBI:29108"/>
    </ligand>
</feature>
<feature type="splice variant" id="VSP_009983" description="In isoform 7." evidence="12">
    <original>MSNNINANNLNTDSSSS</original>
    <variation>MKPFEVSLPPPPPS</variation>
    <location>
        <begin position="1"/>
        <end position="17"/>
    </location>
</feature>
<feature type="splice variant" id="VSP_009984" description="In isoform 8." evidence="12">
    <original>N</original>
    <variation>KSRTADSLI</variation>
    <location>
        <position position="160"/>
    </location>
</feature>
<feature type="splice variant" id="VSP_009985" description="In isoform 2." evidence="12">
    <original>S</original>
    <variation>RSRKR</variation>
    <location>
        <position position="602"/>
    </location>
</feature>
<feature type="splice variant" id="VSP_009986" description="In isoform 9." evidence="12">
    <original>S</original>
    <variation>RSRKRYALFVTFPSNLNPTST</variation>
    <location>
        <position position="602"/>
    </location>
</feature>
<feature type="splice variant" id="VSP_009987" description="In isoform 3." evidence="10 12">
    <original>L</original>
    <variation>PKMSIYKRMKLACCFDCGRSERDCSCMSGSVHSNMDTLERAFPLSSVSVNDCSTSLRAF</variation>
    <location>
        <position position="657"/>
    </location>
</feature>
<feature type="splice variant" id="VSP_009988" description="In isoform 6." evidence="12">
    <original>L</original>
    <variation>IYF</variation>
    <location>
        <position position="657"/>
    </location>
</feature>
<feature type="splice variant" id="VSP_009989" description="In isoform 10." evidence="12">
    <original>M</original>
    <variation>MRFSCPFLP</variation>
    <location>
        <position position="687"/>
    </location>
</feature>
<feature type="splice variant" id="VSP_009990" description="In isoform 5." evidence="11 12">
    <original>L</original>
    <variation>LAKPGKLLPLVSISQEKNSGTQILMITEL</variation>
    <location>
        <position position="906"/>
    </location>
</feature>
<feature type="splice variant" id="VSP_009991" description="In isoform 4." evidence="12">
    <original>KYVQEDRL</original>
    <variation>NSTRMNRMGQEKKWFTDEPDNAYPRNIQIKPMSTHMANQINQYKSTSSLIPPIREVEDEC</variation>
    <location>
        <begin position="1130"/>
        <end position="1137"/>
    </location>
</feature>
<feature type="sequence conflict" description="In Ref. 1; AAC60378." evidence="13" ref="1">
    <original>Q</original>
    <variation>R</variation>
    <location>
        <position position="96"/>
    </location>
</feature>
<feature type="sequence conflict" description="In Ref. 1; AAC60378." evidence="13" ref="1">
    <original>V</original>
    <variation>I</variation>
    <location>
        <position position="397"/>
    </location>
</feature>
<feature type="sequence conflict" description="In Ref. 4; AAC35370." evidence="13" ref="4">
    <original>L</original>
    <variation>P</variation>
    <location>
        <position position="409"/>
    </location>
</feature>
<feature type="sequence conflict" description="In Ref. 1; AAC60378." evidence="13" ref="1">
    <original>C</original>
    <variation>S</variation>
    <location>
        <position position="522"/>
    </location>
</feature>
<feature type="sequence conflict" description="In Ref. 5; BAC20639." evidence="13" ref="5">
    <original>S</original>
    <variation>W</variation>
    <location>
        <position position="712"/>
    </location>
</feature>
<feature type="sequence conflict" description="In Ref. 5; BAC20639." evidence="13" ref="5">
    <original>T</original>
    <variation>P</variation>
    <location>
        <position position="937"/>
    </location>
</feature>
<feature type="sequence conflict" description="In Ref. 5; BAC20639." evidence="13" ref="5">
    <original>V</original>
    <variation>D</variation>
    <location>
        <position position="941"/>
    </location>
</feature>
<feature type="sequence conflict" description="In Ref. 4; AAC35370." evidence="13" ref="4">
    <original>L</original>
    <variation>F</variation>
    <location>
        <position position="1034"/>
    </location>
</feature>
<dbReference type="EMBL" id="U23821">
    <property type="protein sequence ID" value="AAC60378.1"/>
    <property type="molecule type" value="mRNA"/>
</dbReference>
<dbReference type="EMBL" id="U23823">
    <property type="protein sequence ID" value="AAC60125.1"/>
    <property type="molecule type" value="mRNA"/>
</dbReference>
<dbReference type="EMBL" id="U73189">
    <property type="protein sequence ID" value="AAB17873.1"/>
    <property type="molecule type" value="mRNA"/>
</dbReference>
<dbReference type="EMBL" id="AF087663">
    <property type="protein sequence ID" value="AAC35370.1"/>
    <property type="molecule type" value="mRNA"/>
</dbReference>
<dbReference type="EMBL" id="AB072618">
    <property type="protein sequence ID" value="BAC20639.1"/>
    <property type="molecule type" value="mRNA"/>
</dbReference>
<dbReference type="RefSeq" id="NP_989555.1">
    <property type="nucleotide sequence ID" value="NM_204224.1"/>
</dbReference>
<dbReference type="SMR" id="Q8AYS8"/>
<dbReference type="BioGRID" id="675104">
    <property type="interactions" value="111"/>
</dbReference>
<dbReference type="FunCoup" id="Q8AYS8">
    <property type="interactions" value="270"/>
</dbReference>
<dbReference type="IntAct" id="Q8AYS8">
    <property type="interactions" value="106"/>
</dbReference>
<dbReference type="MINT" id="Q8AYS8"/>
<dbReference type="STRING" id="9031.ENSGALP00000063286"/>
<dbReference type="iPTMnet" id="Q8AYS8"/>
<dbReference type="PaxDb" id="9031-ENSGALP00000039705"/>
<dbReference type="GeneID" id="374065"/>
<dbReference type="KEGG" id="gga:374065"/>
<dbReference type="CTD" id="3778"/>
<dbReference type="VEuPathDB" id="HostDB:geneid_374065"/>
<dbReference type="eggNOG" id="KOG1420">
    <property type="taxonomic scope" value="Eukaryota"/>
</dbReference>
<dbReference type="InParanoid" id="Q8AYS8"/>
<dbReference type="OrthoDB" id="10035564at2759"/>
<dbReference type="Reactome" id="R-GGA-1296052">
    <property type="pathway name" value="Ca2+ activated K+ channels"/>
</dbReference>
<dbReference type="Reactome" id="R-GGA-1300642">
    <property type="pathway name" value="Sperm Motility And Taxes"/>
</dbReference>
<dbReference type="PRO" id="PR:Q8AYS8"/>
<dbReference type="Proteomes" id="UP000000539">
    <property type="component" value="Chromosome 6"/>
</dbReference>
<dbReference type="Bgee" id="ENSGALG00000004980">
    <property type="expression patterns" value="Expressed in colon and 9 other cell types or tissues"/>
</dbReference>
<dbReference type="GO" id="GO:0034702">
    <property type="term" value="C:monoatomic ion channel complex"/>
    <property type="evidence" value="ECO:0007669"/>
    <property type="project" value="UniProtKB-KW"/>
</dbReference>
<dbReference type="GO" id="GO:0045211">
    <property type="term" value="C:postsynaptic membrane"/>
    <property type="evidence" value="ECO:0000318"/>
    <property type="project" value="GO_Central"/>
</dbReference>
<dbReference type="GO" id="GO:0015269">
    <property type="term" value="F:calcium-activated potassium channel activity"/>
    <property type="evidence" value="ECO:0000314"/>
    <property type="project" value="UniProtKB"/>
</dbReference>
<dbReference type="GO" id="GO:0060072">
    <property type="term" value="F:large conductance calcium-activated potassium channel activity"/>
    <property type="evidence" value="ECO:0000318"/>
    <property type="project" value="GO_Central"/>
</dbReference>
<dbReference type="GO" id="GO:0046872">
    <property type="term" value="F:metal ion binding"/>
    <property type="evidence" value="ECO:0007669"/>
    <property type="project" value="UniProtKB-KW"/>
</dbReference>
<dbReference type="GO" id="GO:0005249">
    <property type="term" value="F:voltage-gated potassium channel activity"/>
    <property type="evidence" value="ECO:0000314"/>
    <property type="project" value="UniProtKB"/>
</dbReference>
<dbReference type="GO" id="GO:0071805">
    <property type="term" value="P:potassium ion transmembrane transport"/>
    <property type="evidence" value="ECO:0000318"/>
    <property type="project" value="GO_Central"/>
</dbReference>
<dbReference type="FunFam" id="3.40.50.720:FF:000098">
    <property type="entry name" value="calcium-activated potassium channel subunit alpha-1 isoform X3"/>
    <property type="match status" value="1"/>
</dbReference>
<dbReference type="FunFam" id="3.40.50.720:FF:000005">
    <property type="entry name" value="calcium-activated potassium channel subunit alpha-1 isoform X6"/>
    <property type="match status" value="1"/>
</dbReference>
<dbReference type="FunFam" id="1.10.287.70:FF:000015">
    <property type="entry name" value="Calcium-activated potassium channel subunit alpha-1 isoform X7"/>
    <property type="match status" value="1"/>
</dbReference>
<dbReference type="Gene3D" id="1.10.287.70">
    <property type="match status" value="1"/>
</dbReference>
<dbReference type="Gene3D" id="3.40.50.720">
    <property type="entry name" value="NAD(P)-binding Rossmann-like Domain"/>
    <property type="match status" value="2"/>
</dbReference>
<dbReference type="InterPro" id="IPR005821">
    <property type="entry name" value="Ion_trans_dom"/>
</dbReference>
<dbReference type="InterPro" id="IPR003929">
    <property type="entry name" value="K_chnl_BK_asu"/>
</dbReference>
<dbReference type="InterPro" id="IPR047871">
    <property type="entry name" value="K_chnl_Slo-like"/>
</dbReference>
<dbReference type="InterPro" id="IPR036291">
    <property type="entry name" value="NAD(P)-bd_dom_sf"/>
</dbReference>
<dbReference type="InterPro" id="IPR003148">
    <property type="entry name" value="RCK_N"/>
</dbReference>
<dbReference type="InterPro" id="IPR048735">
    <property type="entry name" value="Slowpoke-like_C"/>
</dbReference>
<dbReference type="PANTHER" id="PTHR10027">
    <property type="entry name" value="CALCIUM-ACTIVATED POTASSIUM CHANNEL ALPHA CHAIN"/>
    <property type="match status" value="1"/>
</dbReference>
<dbReference type="PANTHER" id="PTHR10027:SF40">
    <property type="entry name" value="CALCIUM-ACTIVATED POTASSIUM CHANNEL SUBUNIT ALPHA-1"/>
    <property type="match status" value="1"/>
</dbReference>
<dbReference type="Pfam" id="PF03493">
    <property type="entry name" value="BK_channel_a"/>
    <property type="match status" value="1"/>
</dbReference>
<dbReference type="Pfam" id="PF00520">
    <property type="entry name" value="Ion_trans"/>
    <property type="match status" value="1"/>
</dbReference>
<dbReference type="Pfam" id="PF22614">
    <property type="entry name" value="Slo-like_RCK"/>
    <property type="match status" value="2"/>
</dbReference>
<dbReference type="Pfam" id="PF21014">
    <property type="entry name" value="Slowpoke_C"/>
    <property type="match status" value="1"/>
</dbReference>
<dbReference type="PRINTS" id="PR01449">
    <property type="entry name" value="BKCHANNELA"/>
</dbReference>
<dbReference type="PRINTS" id="PR00169">
    <property type="entry name" value="KCHANNEL"/>
</dbReference>
<dbReference type="SUPFAM" id="SSF51735">
    <property type="entry name" value="NAD(P)-binding Rossmann-fold domains"/>
    <property type="match status" value="1"/>
</dbReference>
<dbReference type="SUPFAM" id="SSF81324">
    <property type="entry name" value="Voltage-gated potassium channels"/>
    <property type="match status" value="1"/>
</dbReference>
<dbReference type="PROSITE" id="PS51201">
    <property type="entry name" value="RCK_N"/>
    <property type="match status" value="2"/>
</dbReference>
<name>KCMA1_CHICK</name>
<gene>
    <name type="primary">KCNMA1</name>
    <name type="synonym">KCNMA</name>
</gene>
<organism>
    <name type="scientific">Gallus gallus</name>
    <name type="common">Chicken</name>
    <dbReference type="NCBI Taxonomy" id="9031"/>
    <lineage>
        <taxon>Eukaryota</taxon>
        <taxon>Metazoa</taxon>
        <taxon>Chordata</taxon>
        <taxon>Craniata</taxon>
        <taxon>Vertebrata</taxon>
        <taxon>Euteleostomi</taxon>
        <taxon>Archelosauria</taxon>
        <taxon>Archosauria</taxon>
        <taxon>Dinosauria</taxon>
        <taxon>Saurischia</taxon>
        <taxon>Theropoda</taxon>
        <taxon>Coelurosauria</taxon>
        <taxon>Aves</taxon>
        <taxon>Neognathae</taxon>
        <taxon>Galloanserae</taxon>
        <taxon>Galliformes</taxon>
        <taxon>Phasianidae</taxon>
        <taxon>Phasianinae</taxon>
        <taxon>Gallus</taxon>
    </lineage>
</organism>
<protein>
    <recommendedName>
        <fullName>Calcium-activated potassium channel subunit alpha-1</fullName>
    </recommendedName>
    <alternativeName>
        <fullName>BK channel</fullName>
    </alternativeName>
    <alternativeName>
        <fullName>BKCA alpha</fullName>
    </alternativeName>
    <alternativeName>
        <fullName>Calcium-activated potassium channel, subfamily M subunit alpha-1</fullName>
    </alternativeName>
    <alternativeName>
        <fullName>K(VCA)alpha</fullName>
    </alternativeName>
    <alternativeName>
        <fullName>KCa1.1</fullName>
    </alternativeName>
    <alternativeName>
        <fullName>Maxi K channel</fullName>
        <shortName>MaxiK</shortName>
    </alternativeName>
    <alternativeName>
        <fullName>Slo-alpha</fullName>
    </alternativeName>
    <alternativeName>
        <fullName>Slo1</fullName>
    </alternativeName>
    <alternativeName>
        <fullName>Slowpoke homolog</fullName>
        <shortName>Slo homolog</shortName>
        <shortName>cSlo</shortName>
    </alternativeName>
</protein>
<keyword id="KW-0025">Alternative splicing</keyword>
<keyword id="KW-0106">Calcium</keyword>
<keyword id="KW-1003">Cell membrane</keyword>
<keyword id="KW-0407">Ion channel</keyword>
<keyword id="KW-0406">Ion transport</keyword>
<keyword id="KW-0460">Magnesium</keyword>
<keyword id="KW-0472">Membrane</keyword>
<keyword id="KW-0479">Metal-binding</keyword>
<keyword id="KW-0630">Potassium</keyword>
<keyword id="KW-0631">Potassium channel</keyword>
<keyword id="KW-0633">Potassium transport</keyword>
<keyword id="KW-1185">Reference proteome</keyword>
<keyword id="KW-0812">Transmembrane</keyword>
<keyword id="KW-1133">Transmembrane helix</keyword>
<keyword id="KW-0813">Transport</keyword>
<keyword id="KW-0851">Voltage-gated channel</keyword>
<evidence type="ECO:0000250" key="1"/>
<evidence type="ECO:0000250" key="2">
    <source>
        <dbReference type="UniProtKB" id="B7ZC96"/>
    </source>
</evidence>
<evidence type="ECO:0000250" key="3">
    <source>
        <dbReference type="UniProtKB" id="Q12791"/>
    </source>
</evidence>
<evidence type="ECO:0000255" key="4"/>
<evidence type="ECO:0000255" key="5">
    <source>
        <dbReference type="PROSITE-ProRule" id="PRU00543"/>
    </source>
</evidence>
<evidence type="ECO:0000256" key="6">
    <source>
        <dbReference type="SAM" id="MobiDB-lite"/>
    </source>
</evidence>
<evidence type="ECO:0000269" key="7">
    <source>
    </source>
</evidence>
<evidence type="ECO:0000269" key="8">
    <source>
    </source>
</evidence>
<evidence type="ECO:0000269" key="9">
    <source>
    </source>
</evidence>
<evidence type="ECO:0000303" key="10">
    <source>
    </source>
</evidence>
<evidence type="ECO:0000303" key="11">
    <source>
    </source>
</evidence>
<evidence type="ECO:0000303" key="12">
    <source>
    </source>
</evidence>
<evidence type="ECO:0000305" key="13"/>
<comment type="function">
    <text evidence="7 8 9">Potassium channel activated by both membrane depolarization or increase in cytosolic Ca(2+) that mediates export of K(+). It is also activated by the concentration of cytosolic Mg(2+). Its activation dampens the excitatory events that elevate the cytosolic Ca(2+) concentration and/or depolarize the cell membrane. It therefore contributes to repolarization of the membrane potential. Plays a key role in controlling excitability in a number of systems, such as regulation of the contraction of smooth muscle, the tuning of hair cells in the cochlea, regulation of transmitter release, and innate immunity. In smooth muscles, its activation by high level of Ca(2+), caused by ryanodine receptors in the sarcoplasmic reticulum, regulates the membrane potential. In cochlea cells, its number and kinetic properties partly determine the characteristic frequency of each hair cell and thereby helps to establish a tonotopic map. Highly sensitive to both iberiotoxin (IbTx) and charybdotoxin (CTX).</text>
</comment>
<comment type="catalytic activity">
    <reaction evidence="7 8 9">
        <text>K(+)(in) = K(+)(out)</text>
        <dbReference type="Rhea" id="RHEA:29463"/>
        <dbReference type="ChEBI" id="CHEBI:29103"/>
    </reaction>
</comment>
<comment type="activity regulation">
    <text evidence="3">Ethanol and carbon monoxide-bound heme increase channel activation. Heme inhibits channel activation (By similarity).</text>
</comment>
<comment type="subunit">
    <text evidence="3">Homotetramer; which constitutes the calcium-activated potassium channel.</text>
</comment>
<comment type="interaction">
    <interactant intactId="EBI-1635766">
        <id>Q8AYS8</id>
    </interactant>
    <interactant intactId="EBI-4306384">
        <id>O57513</id>
        <label>akt1</label>
    </interactant>
    <organismsDiffer>false</organismsDiffer>
    <experiments>2</experiments>
</comment>
<comment type="interaction">
    <interactant intactId="EBI-1635766">
        <id>Q8AYS8</id>
    </interactant>
    <interactant intactId="EBI-1635947">
        <id>P17153</id>
        <label>ANXA5</label>
    </interactant>
    <organismsDiffer>false</organismsDiffer>
    <experiments>3</experiments>
</comment>
<comment type="interaction">
    <interactant intactId="EBI-1635766">
        <id>Q8AYS8</id>
    </interactant>
    <interactant intactId="EBI-7206371">
        <id>P08251</id>
        <label>ATP1B1</label>
    </interactant>
    <organismsDiffer>false</organismsDiffer>
    <experiments>3</experiments>
</comment>
<comment type="interaction">
    <interactant intactId="EBI-1635766">
        <id>Q8AYS8</id>
    </interactant>
    <interactant intactId="EBI-2530463">
        <id>Q01406</id>
        <label>CTTN1</label>
    </interactant>
    <organismsDiffer>false</organismsDiffer>
    <experiments>2</experiments>
</comment>
<comment type="interaction">
    <interactant intactId="EBI-1635766">
        <id>Q8AYS8</id>
    </interactant>
    <interactant intactId="EBI-4306413">
        <id>F1NPL8</id>
        <label>GSK3A</label>
    </interactant>
    <organismsDiffer>false</organismsDiffer>
    <experiments>2</experiments>
</comment>
<comment type="interaction">
    <interactant intactId="EBI-1635766">
        <id>Q8AYS8</id>
    </interactant>
    <interactant intactId="EBI-1636399">
        <id>P42324</id>
        <label>HPCAL1</label>
    </interactant>
    <organismsDiffer>false</organismsDiffer>
    <experiments>3</experiments>
</comment>
<comment type="interaction">
    <interactant intactId="EBI-1635766">
        <id>Q8AYS8</id>
    </interactant>
    <interactant intactId="EBI-1635886">
        <id>Q90593</id>
        <label>HSPA5</label>
    </interactant>
    <organismsDiffer>false</organismsDiffer>
    <experiments>3</experiments>
</comment>
<comment type="interaction">
    <interactant intactId="EBI-1635766">
        <id>Q8AYS8</id>
    </interactant>
    <interactant intactId="EBI-1635874">
        <id>Q5ZL72</id>
        <label>HSPD1</label>
    </interactant>
    <organismsDiffer>false</organismsDiffer>
    <experiments>3</experiments>
</comment>
<comment type="interaction">
    <interactant intactId="EBI-1635766">
        <id>Q8AYS8</id>
    </interactant>
    <interactant intactId="EBI-1636456">
        <id>Q5F425</id>
        <label>LIN7C</label>
    </interactant>
    <organismsDiffer>false</organismsDiffer>
    <experiments>3</experiments>
</comment>
<comment type="interaction">
    <interactant intactId="EBI-1635766">
        <id>Q8AYS8</id>
    </interactant>
    <interactant intactId="EBI-4306427">
        <id>F1NLP2</id>
        <label>PDK1</label>
    </interactant>
    <organismsDiffer>false</organismsDiffer>
    <experiments>2</experiments>
</comment>
<comment type="interaction">
    <interactant intactId="EBI-1635766">
        <id>Q8AYS8</id>
    </interactant>
    <interactant intactId="EBI-1636878">
        <id>P84173</id>
        <label>PHB1</label>
    </interactant>
    <organismsDiffer>false</organismsDiffer>
    <experiments>3</experiments>
</comment>
<comment type="interaction">
    <interactant intactId="EBI-1635766">
        <id>Q8AYS8</id>
    </interactant>
    <interactant intactId="EBI-4306330">
        <id>F1NSA8</id>
        <label>RAP1A</label>
    </interactant>
    <organismsDiffer>false</organismsDiffer>
    <experiments>2</experiments>
</comment>
<comment type="interaction">
    <interactant intactId="EBI-1635766">
        <id>Q8AYS8</id>
    </interactant>
    <interactant intactId="EBI-1637031">
        <id>P60878</id>
        <label>SNAP25</label>
    </interactant>
    <organismsDiffer>false</organismsDiffer>
    <experiments>3</experiments>
</comment>
<comment type="interaction">
    <interactant intactId="EBI-1635766">
        <id>Q8AYS8</id>
    </interactant>
    <interactant intactId="EBI-1637015">
        <id>P80566</id>
        <label>SOD1</label>
    </interactant>
    <organismsDiffer>false</organismsDiffer>
    <experiments>3</experiments>
</comment>
<comment type="interaction">
    <interactant intactId="EBI-1635766">
        <id>Q8AYS8</id>
    </interactant>
    <interactant intactId="EBI-1636998">
        <id>P31395</id>
        <label>STMN1</label>
    </interactant>
    <organismsDiffer>false</organismsDiffer>
    <experiments>3</experiments>
</comment>
<comment type="interaction">
    <interactant intactId="EBI-1635766">
        <id>Q8AYS8</id>
    </interactant>
    <interactant intactId="EBI-1637127">
        <id>Q5ZMU9</id>
        <label>VCP</label>
    </interactant>
    <organismsDiffer>false</organismsDiffer>
    <experiments>3</experiments>
</comment>
<comment type="interaction">
    <interactant intactId="EBI-1635766">
        <id>Q8AYS8</id>
    </interactant>
    <interactant intactId="EBI-1635853">
        <id>Q5F3W6</id>
        <label>YWHAG</label>
    </interactant>
    <organismsDiffer>false</organismsDiffer>
    <experiments>3</experiments>
</comment>
<comment type="interaction">
    <interactant intactId="EBI-1635766">
        <id>Q8AYS8</id>
    </interactant>
    <interactant intactId="EBI-1636307">
        <id>P08106</id>
    </interactant>
    <organismsDiffer>false</organismsDiffer>
    <experiments>3</experiments>
</comment>
<comment type="subcellular location">
    <subcellularLocation>
        <location evidence="3">Cell membrane</location>
        <topology evidence="4">Multi-pass membrane protein</topology>
    </subcellularLocation>
</comment>
<comment type="alternative products">
    <event type="alternative splicing"/>
    <isoform>
        <id>Q8AYS8-1</id>
        <name>1</name>
        <sequence type="displayed"/>
    </isoform>
    <isoform>
        <id>Q8AYS8-2</id>
        <name>2</name>
        <sequence type="described" ref="VSP_009985"/>
    </isoform>
    <isoform>
        <id>Q8AYS8-3</id>
        <name>3</name>
        <sequence type="described" ref="VSP_009987"/>
    </isoform>
    <isoform>
        <id>Q8AYS8-4</id>
        <name>4</name>
        <sequence type="described" ref="VSP_009991"/>
    </isoform>
    <isoform>
        <id>Q8AYS8-5</id>
        <name>5</name>
        <name>IK</name>
        <sequence type="described" ref="VSP_009990"/>
    </isoform>
    <isoform>
        <id>Q8AYS8-6</id>
        <name>6</name>
        <sequence type="described" ref="VSP_009988"/>
    </isoform>
    <isoform>
        <id>Q8AYS8-7</id>
        <name>7</name>
        <sequence type="described" ref="VSP_009983"/>
    </isoform>
    <isoform>
        <id>Q8AYS8-8</id>
        <name>8</name>
        <sequence type="described" ref="VSP_009984"/>
    </isoform>
    <isoform>
        <id>Q8AYS8-9</id>
        <name>9</name>
        <sequence type="described" ref="VSP_009986"/>
    </isoform>
    <isoform>
        <id>Q8AYS8-10</id>
        <name>10</name>
        <sequence type="described" ref="VSP_009989"/>
    </isoform>
    <text>Additional isoforms seem to exist.</text>
</comment>
<comment type="domain">
    <text evidence="3">The S0 segment is essential for the modulation by the accessory beta subunits.</text>
</comment>
<comment type="domain">
    <text evidence="3">The S4 segment, which is characterized by a series of positively charged amino acids at every third position, is part of the voltage-sensor.</text>
</comment>
<comment type="domain">
    <text evidence="3">The pore-forming domain (also referred as P region) is imbedded into the membrane, and forms the selectivity filter of the pore. It contains the signature sequence of potassium channels that displays selectivity to potassium (By similarity).</text>
</comment>
<comment type="domain">
    <text evidence="1">The RCK N-terminal domain mediates the homotetramerization, thereby promoting the assembly of monomers into functional potassium channel. It includes binding sites for Ca(2+) and Mg(2+) (By similarity).</text>
</comment>
<comment type="domain">
    <text evidence="3">The heme-binding motif mediates inhibition of channel activation by heme. Carbon monoxide-bound heme leads to increased channel activation (By similarity).</text>
</comment>
<comment type="domain">
    <text evidence="2">The calcium bowl constitutes one of the Ca(2+) sensors and probably acts as a Ca(2+)-binding site. There are however other Ca(2+) sensor regions required for activation of the channel.</text>
</comment>
<comment type="miscellaneous">
    <text>The protein was initially thought to contain two functionally distinct parts: The core channel (from the N-terminus to the S9 segment) that mediates the channel activity, and the cytoplasmic tail (from the S9 segment to the C-terminus) that mediates the calcium sensing. The situation is however more complex, since the core channel contains binding sites for Ca(2+) and Mg(2+).</text>
</comment>
<comment type="similarity">
    <text evidence="13">Belongs to the potassium channel family. Calcium-activated (TC 1.A.1.3) subfamily. KCa1.1/KCNMA1 sub-subfamily.</text>
</comment>
<comment type="caution">
    <text evidence="13">It is uncertain whether Met-1 is the initiator or if the sequence starts further upstream.</text>
</comment>
<reference key="1">
    <citation type="journal article" date="1997" name="Proc. R. Soc. B">
        <title>CSlo encodes calcium-activated potassium channels in the chick's cochlea.</title>
        <authorList>
            <person name="Jiang G.J."/>
            <person name="Zidanic M."/>
            <person name="Michaels R.L."/>
            <person name="Michael T.H."/>
            <person name="Griguer C."/>
            <person name="Fuchs P.A."/>
        </authorList>
    </citation>
    <scope>NUCLEOTIDE SEQUENCE [MRNA] (ISOFORM 1)</scope>
    <scope>NUCLEOTIDE SEQUENCE OF 398-1137 (ISOFORM 4)</scope>
    <scope>FUNCTION</scope>
    <scope>TRANSPORTER ACTIVITY</scope>
    <source>
        <strain>Leghorn</strain>
        <tissue>Cochlear duct</tissue>
    </source>
</reference>
<reference key="2">
    <citation type="journal article" date="1997" name="Neuron">
        <title>Distribution of Ca2+-activated K+ channel isoforms along the tonotopic gradient of the chicken's cochlea.</title>
        <authorList>
            <person name="Rosenblatt K.P."/>
            <person name="Sun Z.-P."/>
            <person name="Heller S."/>
            <person name="Hudspeth A.J."/>
        </authorList>
    </citation>
    <scope>NUCLEOTIDE SEQUENCE [MRNA] (ISOFORMS 1; 2; 3; 4; 5; 6; 7; 8; 9 AND 10)</scope>
    <scope>FUNCTION</scope>
    <scope>TRANSPORTER ACTIVITY</scope>
    <source>
        <strain>White leghorn</strain>
        <tissue>Brain</tissue>
    </source>
</reference>
<reference key="3">
    <citation type="journal article" date="1998" name="Curr. Eye Res.">
        <title>Molecular biology and electrophysiology of calcium-activated potassium channels from lens epithelium.</title>
        <authorList>
            <person name="Rae J.L."/>
            <person name="Shepard A.R."/>
        </authorList>
    </citation>
    <scope>NUCLEOTIDE SEQUENCE [MRNA] (ISOFORM 1)</scope>
    <source>
        <strain>White leghorn</strain>
        <tissue>Lens epithelium</tissue>
    </source>
</reference>
<reference key="4">
    <citation type="journal article" date="1999" name="Am. J. Physiol.">
        <title>Characterization of a newly found stretch-activated KCa,ATP channel in cultured chick ventricular myocytes.</title>
        <authorList>
            <person name="Kawakubo T."/>
            <person name="Naruse K."/>
            <person name="Matsubara T."/>
            <person name="Hotta N."/>
            <person name="Sokabe M."/>
        </authorList>
    </citation>
    <scope>NUCLEOTIDE SEQUENCE [MRNA] OF 24-1137 (ISOFORM 3)</scope>
</reference>
<reference key="5">
    <citation type="journal article" date="1996" name="Neuron">
        <title>Posttranslational regulation of Ca(2+)-activated K+ currents by a target-derived factor in developing parasympathetic neurons.</title>
        <authorList>
            <person name="Subramony P."/>
            <person name="Raucher S."/>
            <person name="Dryer L."/>
            <person name="Dryer S.E."/>
        </authorList>
    </citation>
    <scope>NUCLEOTIDE SEQUENCE [MRNA] OF 710-973 (ISOFORM 5)</scope>
</reference>
<reference key="6">
    <citation type="journal article" date="1999" name="Science">
        <title>A molecular mechanism for electrical tuning of cochlear hair cells.</title>
        <authorList>
            <person name="Ramanathan K."/>
            <person name="Michael T.H."/>
            <person name="Jiang G.-J."/>
            <person name="Hiel H."/>
            <person name="Fuchs P.A."/>
        </authorList>
    </citation>
    <scope>FUNCTION</scope>
    <scope>TRANSPORTER ACTIVITY</scope>
</reference>